<comment type="function">
    <text evidence="1">Located at the top of the head of the small subunit, it contacts several helices of the small subunit rRNA.</text>
</comment>
<comment type="subunit">
    <text>Part of the small ribosomal subunit.</text>
</comment>
<comment type="subcellular location">
    <subcellularLocation>
        <location>Mitochondrion</location>
    </subcellularLocation>
</comment>
<comment type="similarity">
    <text evidence="3">Belongs to the universal ribosomal protein uS13 family.</text>
</comment>
<feature type="chain" id="PRO_0000312400" description="Small ribosomal subunit protein uS13m">
    <location>
        <begin position="1"/>
        <end position="170"/>
    </location>
</feature>
<feature type="region of interest" description="Disordered" evidence="2">
    <location>
        <begin position="130"/>
        <end position="170"/>
    </location>
</feature>
<feature type="compositionally biased region" description="Basic residues" evidence="2">
    <location>
        <begin position="132"/>
        <end position="147"/>
    </location>
</feature>
<feature type="compositionally biased region" description="Basic residues" evidence="2">
    <location>
        <begin position="155"/>
        <end position="170"/>
    </location>
</feature>
<geneLocation type="mitochondrion"/>
<accession>Q2LCP2</accession>
<gene>
    <name type="primary">mrps13</name>
    <name type="synonym">rps13</name>
</gene>
<proteinExistence type="inferred from homology"/>
<protein>
    <recommendedName>
        <fullName evidence="3">Small ribosomal subunit protein uS13m</fullName>
    </recommendedName>
    <alternativeName>
        <fullName>Ribosomal protein S13, mitochondrial</fullName>
    </alternativeName>
</protein>
<name>RT13_DICCI</name>
<dbReference type="EMBL" id="DQ336395">
    <property type="protein sequence ID" value="ABC60401.1"/>
    <property type="molecule type" value="Genomic_DNA"/>
</dbReference>
<dbReference type="RefSeq" id="YP_492650.1">
    <property type="nucleotide sequence ID" value="NC_007787.2"/>
</dbReference>
<dbReference type="SMR" id="Q2LCP2"/>
<dbReference type="GeneID" id="3912638"/>
<dbReference type="GO" id="GO:0005739">
    <property type="term" value="C:mitochondrion"/>
    <property type="evidence" value="ECO:0007669"/>
    <property type="project" value="UniProtKB-SubCell"/>
</dbReference>
<dbReference type="GO" id="GO:1990904">
    <property type="term" value="C:ribonucleoprotein complex"/>
    <property type="evidence" value="ECO:0007669"/>
    <property type="project" value="UniProtKB-KW"/>
</dbReference>
<dbReference type="GO" id="GO:0005840">
    <property type="term" value="C:ribosome"/>
    <property type="evidence" value="ECO:0007669"/>
    <property type="project" value="UniProtKB-KW"/>
</dbReference>
<dbReference type="GO" id="GO:0019843">
    <property type="term" value="F:rRNA binding"/>
    <property type="evidence" value="ECO:0007669"/>
    <property type="project" value="UniProtKB-KW"/>
</dbReference>
<dbReference type="InterPro" id="IPR010979">
    <property type="entry name" value="Ribosomal_uS13-like_H2TH"/>
</dbReference>
<dbReference type="SUPFAM" id="SSF46946">
    <property type="entry name" value="S13-like H2TH domain"/>
    <property type="match status" value="1"/>
</dbReference>
<dbReference type="PROSITE" id="PS50159">
    <property type="entry name" value="RIBOSOMAL_S13_2"/>
    <property type="match status" value="1"/>
</dbReference>
<reference key="1">
    <citation type="journal article" date="2008" name="Mol. Biol. Evol.">
        <title>Mitochondrial genome evolution in the social amoebae.</title>
        <authorList>
            <person name="Heidel A.J."/>
            <person name="Gloeckner G."/>
        </authorList>
    </citation>
    <scope>NUCLEOTIDE SEQUENCE [LARGE SCALE GENOMIC DNA]</scope>
</reference>
<organism>
    <name type="scientific">Dictyostelium citrinum</name>
    <name type="common">Slime mold</name>
    <dbReference type="NCBI Taxonomy" id="361072"/>
    <lineage>
        <taxon>Eukaryota</taxon>
        <taxon>Amoebozoa</taxon>
        <taxon>Evosea</taxon>
        <taxon>Eumycetozoa</taxon>
        <taxon>Dictyostelia</taxon>
        <taxon>Dictyosteliales</taxon>
        <taxon>Dictyosteliaceae</taxon>
        <taxon>Dictyostelium</taxon>
    </lineage>
</organism>
<keyword id="KW-0496">Mitochondrion</keyword>
<keyword id="KW-0687">Ribonucleoprotein</keyword>
<keyword id="KW-0689">Ribosomal protein</keyword>
<keyword id="KW-0694">RNA-binding</keyword>
<keyword id="KW-0699">rRNA-binding</keyword>
<sequence>MGIVIGKIELNSEKQIIGELKKKIKGINLNVAQKVIMLSGNVASLKGNTLLKSQEKQILEILQSFKGLYDYTYGLKVEALDKIRRLENVYRYIRVIKGYPIKGRTKSNANTAKRQASPGGNKKLKIMDILKKKPTNRKERRIFNKIKKLQDKHNKQQQKNKKSKKWKTKK</sequence>
<evidence type="ECO:0000250" key="1"/>
<evidence type="ECO:0000256" key="2">
    <source>
        <dbReference type="SAM" id="MobiDB-lite"/>
    </source>
</evidence>
<evidence type="ECO:0000305" key="3"/>